<feature type="chain" id="PRO_0000367162" description="UPF0173 metal-dependent hydrolase BcerKBAB4_4442">
    <location>
        <begin position="1"/>
        <end position="228"/>
    </location>
</feature>
<protein>
    <recommendedName>
        <fullName evidence="1">UPF0173 metal-dependent hydrolase BcerKBAB4_4442</fullName>
    </recommendedName>
</protein>
<comment type="similarity">
    <text evidence="1">Belongs to the UPF0173 family.</text>
</comment>
<evidence type="ECO:0000255" key="1">
    <source>
        <dbReference type="HAMAP-Rule" id="MF_00457"/>
    </source>
</evidence>
<proteinExistence type="inferred from homology"/>
<dbReference type="EMBL" id="CP000903">
    <property type="protein sequence ID" value="ABY45601.1"/>
    <property type="molecule type" value="Genomic_DNA"/>
</dbReference>
<dbReference type="SMR" id="A9VJS4"/>
<dbReference type="KEGG" id="bwe:BcerKBAB4_4442"/>
<dbReference type="eggNOG" id="COG2220">
    <property type="taxonomic scope" value="Bacteria"/>
</dbReference>
<dbReference type="HOGENOM" id="CLU_070010_4_1_9"/>
<dbReference type="Proteomes" id="UP000002154">
    <property type="component" value="Chromosome"/>
</dbReference>
<dbReference type="GO" id="GO:0016787">
    <property type="term" value="F:hydrolase activity"/>
    <property type="evidence" value="ECO:0007669"/>
    <property type="project" value="UniProtKB-UniRule"/>
</dbReference>
<dbReference type="Gene3D" id="3.60.15.10">
    <property type="entry name" value="Ribonuclease Z/Hydroxyacylglutathione hydrolase-like"/>
    <property type="match status" value="1"/>
</dbReference>
<dbReference type="HAMAP" id="MF_00457">
    <property type="entry name" value="UPF0173"/>
    <property type="match status" value="1"/>
</dbReference>
<dbReference type="InterPro" id="IPR001279">
    <property type="entry name" value="Metallo-B-lactamas"/>
</dbReference>
<dbReference type="InterPro" id="IPR036866">
    <property type="entry name" value="RibonucZ/Hydroxyglut_hydro"/>
</dbReference>
<dbReference type="InterPro" id="IPR022877">
    <property type="entry name" value="UPF0173"/>
</dbReference>
<dbReference type="InterPro" id="IPR050114">
    <property type="entry name" value="UPF0173_UPF0282_UlaG_hydrolase"/>
</dbReference>
<dbReference type="NCBIfam" id="NF001911">
    <property type="entry name" value="PRK00685.1"/>
    <property type="match status" value="1"/>
</dbReference>
<dbReference type="PANTHER" id="PTHR43546:SF3">
    <property type="entry name" value="UPF0173 METAL-DEPENDENT HYDROLASE MJ1163"/>
    <property type="match status" value="1"/>
</dbReference>
<dbReference type="PANTHER" id="PTHR43546">
    <property type="entry name" value="UPF0173 METAL-DEPENDENT HYDROLASE MJ1163-RELATED"/>
    <property type="match status" value="1"/>
</dbReference>
<dbReference type="Pfam" id="PF12706">
    <property type="entry name" value="Lactamase_B_2"/>
    <property type="match status" value="1"/>
</dbReference>
<dbReference type="SMART" id="SM00849">
    <property type="entry name" value="Lactamase_B"/>
    <property type="match status" value="1"/>
</dbReference>
<dbReference type="SUPFAM" id="SSF56281">
    <property type="entry name" value="Metallo-hydrolase/oxidoreductase"/>
    <property type="match status" value="1"/>
</dbReference>
<keyword id="KW-0378">Hydrolase</keyword>
<gene>
    <name type="ordered locus">BcerKBAB4_4442</name>
</gene>
<sequence>MMRVSYHGHSVVKIETNGKVILIDPFLTGNPKTDLKAEDVKVDAIILSHGHGDHVGDTVALAKNNNAVVVAPFELATFLGWQGVNTHPMHIGGSHEFDFGKVKFTQAFHGSSYIDEENKTITYTGMPAGILFTAEEKTVYHAGDTALFSDMKLIGELNNIDVAFLPIGDNFTMGPEDAVLAAKWIEAKTVVPMHYNTFPVIEQDPYQFVEKLQNCTGKVLEAGESITL</sequence>
<organism>
    <name type="scientific">Bacillus mycoides (strain KBAB4)</name>
    <name type="common">Bacillus weihenstephanensis</name>
    <dbReference type="NCBI Taxonomy" id="315730"/>
    <lineage>
        <taxon>Bacteria</taxon>
        <taxon>Bacillati</taxon>
        <taxon>Bacillota</taxon>
        <taxon>Bacilli</taxon>
        <taxon>Bacillales</taxon>
        <taxon>Bacillaceae</taxon>
        <taxon>Bacillus</taxon>
        <taxon>Bacillus cereus group</taxon>
    </lineage>
</organism>
<accession>A9VJS4</accession>
<reference key="1">
    <citation type="journal article" date="2008" name="Chem. Biol. Interact.">
        <title>Extending the Bacillus cereus group genomics to putative food-borne pathogens of different toxicity.</title>
        <authorList>
            <person name="Lapidus A."/>
            <person name="Goltsman E."/>
            <person name="Auger S."/>
            <person name="Galleron N."/>
            <person name="Segurens B."/>
            <person name="Dossat C."/>
            <person name="Land M.L."/>
            <person name="Broussolle V."/>
            <person name="Brillard J."/>
            <person name="Guinebretiere M.-H."/>
            <person name="Sanchis V."/>
            <person name="Nguen-the C."/>
            <person name="Lereclus D."/>
            <person name="Richardson P."/>
            <person name="Wincker P."/>
            <person name="Weissenbach J."/>
            <person name="Ehrlich S.D."/>
            <person name="Sorokin A."/>
        </authorList>
    </citation>
    <scope>NUCLEOTIDE SEQUENCE [LARGE SCALE GENOMIC DNA]</scope>
    <source>
        <strain>KBAB4</strain>
    </source>
</reference>
<name>Y4442_BACMK</name>